<evidence type="ECO:0000250" key="1"/>
<evidence type="ECO:0000250" key="2">
    <source>
        <dbReference type="UniProtKB" id="P13674"/>
    </source>
</evidence>
<evidence type="ECO:0000255" key="3">
    <source>
        <dbReference type="PROSITE-ProRule" id="PRU00805"/>
    </source>
</evidence>
<evidence type="ECO:0000256" key="4">
    <source>
        <dbReference type="SAM" id="MobiDB-lite"/>
    </source>
</evidence>
<evidence type="ECO:0000305" key="5"/>
<sequence length="534" mass="61010">MIWYILVVGILLPQSLAHPGFFTSIGQMTDLIHTEKDLVTSLKDYIKAEEDKLEQIKKWAEKLDRLTSTATKDPEGFVGHPVNAFKLMKRLNTEWSELENLVLKDMSDGFISNLTIQRQYFPNDEDQVGAAKALLRLQDTYNLDTDTISKGDLPGVKHKSFLTVEDCFELGKVAYTEADYYHTELWMEQALRQLDEGEVSTVDKVSVLDYLSYAVYQQGDLDKALLLTKKLLELDPEHQRANGNLKYFEYIMAKEKDANKSSSDDQSDQKTTLKKKGAAVDYLPERQKYEMLCRGEGIKMTPRRQKKLFCRYHDGNRNPKFILAPAKQEDEWDKPRIIRFHDIISDAEIEVVKDLAKPRLRRATISNPITGDLETVHYRISKSAWLSGYENPVVSRINMRIQDLTGLDVSTAEELQVANYGVGGQYEPHFDFARKDEPDAFKELGTGNRIATWLFYMSDVLAGGATVFPEVGASVWPKKGTAVFWYNLFASGEGDYSTRHAACPVLVGNKWVSNKWLHERGQEFRRPCTLSELE</sequence>
<dbReference type="EC" id="1.14.11.2" evidence="2"/>
<dbReference type="EMBL" id="BC114708">
    <property type="protein sequence ID" value="AAI14709.1"/>
    <property type="molecule type" value="mRNA"/>
</dbReference>
<dbReference type="RefSeq" id="NP_001069238.1">
    <property type="nucleotide sequence ID" value="NM_001075770.1"/>
</dbReference>
<dbReference type="RefSeq" id="XP_059738494.1">
    <property type="nucleotide sequence ID" value="XM_059882511.1"/>
</dbReference>
<dbReference type="RefSeq" id="XP_059738496.1">
    <property type="nucleotide sequence ID" value="XM_059882513.1"/>
</dbReference>
<dbReference type="RefSeq" id="XP_059738497.1">
    <property type="nucleotide sequence ID" value="XM_059882514.1"/>
</dbReference>
<dbReference type="SMR" id="Q1RMU3"/>
<dbReference type="FunCoup" id="Q1RMU3">
    <property type="interactions" value="568"/>
</dbReference>
<dbReference type="STRING" id="9913.ENSBTAP00000044089"/>
<dbReference type="GlyCosmos" id="Q1RMU3">
    <property type="glycosylation" value="2 sites, No reported glycans"/>
</dbReference>
<dbReference type="GlyGen" id="Q1RMU3">
    <property type="glycosylation" value="2 sites"/>
</dbReference>
<dbReference type="PaxDb" id="9913-ENSBTAP00000044089"/>
<dbReference type="PeptideAtlas" id="Q1RMU3"/>
<dbReference type="Ensembl" id="ENSBTAT00000056188.4">
    <property type="protein sequence ID" value="ENSBTAP00000048870.2"/>
    <property type="gene ID" value="ENSBTAG00000032996.5"/>
</dbReference>
<dbReference type="GeneID" id="518288"/>
<dbReference type="KEGG" id="bta:518288"/>
<dbReference type="CTD" id="5033"/>
<dbReference type="VEuPathDB" id="HostDB:ENSBTAG00000032996"/>
<dbReference type="VGNC" id="VGNC:32535">
    <property type="gene designation" value="P4HA1"/>
</dbReference>
<dbReference type="eggNOG" id="KOG1591">
    <property type="taxonomic scope" value="Eukaryota"/>
</dbReference>
<dbReference type="GeneTree" id="ENSGT00940000156635"/>
<dbReference type="InParanoid" id="Q1RMU3"/>
<dbReference type="OrthoDB" id="420380at2759"/>
<dbReference type="Reactome" id="R-BTA-1650814">
    <property type="pathway name" value="Collagen biosynthesis and modifying enzymes"/>
</dbReference>
<dbReference type="Proteomes" id="UP000009136">
    <property type="component" value="Chromosome 28"/>
</dbReference>
<dbReference type="Bgee" id="ENSBTAG00000032996">
    <property type="expression patterns" value="Expressed in diaphragm and 106 other cell types or tissues"/>
</dbReference>
<dbReference type="GO" id="GO:0005783">
    <property type="term" value="C:endoplasmic reticulum"/>
    <property type="evidence" value="ECO:0000318"/>
    <property type="project" value="GO_Central"/>
</dbReference>
<dbReference type="GO" id="GO:0005788">
    <property type="term" value="C:endoplasmic reticulum lumen"/>
    <property type="evidence" value="ECO:0007669"/>
    <property type="project" value="UniProtKB-SubCell"/>
</dbReference>
<dbReference type="GO" id="GO:0005739">
    <property type="term" value="C:mitochondrion"/>
    <property type="evidence" value="ECO:0007669"/>
    <property type="project" value="Ensembl"/>
</dbReference>
<dbReference type="GO" id="GO:0042802">
    <property type="term" value="F:identical protein binding"/>
    <property type="evidence" value="ECO:0007669"/>
    <property type="project" value="Ensembl"/>
</dbReference>
<dbReference type="GO" id="GO:0005506">
    <property type="term" value="F:iron ion binding"/>
    <property type="evidence" value="ECO:0007669"/>
    <property type="project" value="InterPro"/>
</dbReference>
<dbReference type="GO" id="GO:0031418">
    <property type="term" value="F:L-ascorbic acid binding"/>
    <property type="evidence" value="ECO:0007669"/>
    <property type="project" value="UniProtKB-KW"/>
</dbReference>
<dbReference type="GO" id="GO:0004656">
    <property type="term" value="F:procollagen-proline 4-dioxygenase activity"/>
    <property type="evidence" value="ECO:0000250"/>
    <property type="project" value="UniProtKB"/>
</dbReference>
<dbReference type="GO" id="GO:0030199">
    <property type="term" value="P:collagen fibril organization"/>
    <property type="evidence" value="ECO:0000318"/>
    <property type="project" value="GO_Central"/>
</dbReference>
<dbReference type="FunFam" id="1.25.40.10:FF:000006">
    <property type="entry name" value="Prolyl 4-hydroxylase subunit alpha 2"/>
    <property type="match status" value="1"/>
</dbReference>
<dbReference type="FunFam" id="2.60.120.620:FF:000001">
    <property type="entry name" value="Prolyl 4-hydroxylase subunit alpha 2"/>
    <property type="match status" value="1"/>
</dbReference>
<dbReference type="Gene3D" id="6.10.140.1460">
    <property type="match status" value="1"/>
</dbReference>
<dbReference type="Gene3D" id="2.60.120.620">
    <property type="entry name" value="q2cbj1_9rhob like domain"/>
    <property type="match status" value="1"/>
</dbReference>
<dbReference type="Gene3D" id="1.25.40.10">
    <property type="entry name" value="Tetratricopeptide repeat domain"/>
    <property type="match status" value="1"/>
</dbReference>
<dbReference type="InterPro" id="IPR005123">
    <property type="entry name" value="Oxoglu/Fe-dep_dioxygenase_dom"/>
</dbReference>
<dbReference type="InterPro" id="IPR045054">
    <property type="entry name" value="P4HA-like"/>
</dbReference>
<dbReference type="InterPro" id="IPR006620">
    <property type="entry name" value="Pro_4_hyd_alph"/>
</dbReference>
<dbReference type="InterPro" id="IPR044862">
    <property type="entry name" value="Pro_4_hyd_alph_FE2OG_OXY"/>
</dbReference>
<dbReference type="InterPro" id="IPR013547">
    <property type="entry name" value="Pro_4_hyd_alph_N"/>
</dbReference>
<dbReference type="InterPro" id="IPR011990">
    <property type="entry name" value="TPR-like_helical_dom_sf"/>
</dbReference>
<dbReference type="InterPro" id="IPR019734">
    <property type="entry name" value="TPR_rpt"/>
</dbReference>
<dbReference type="PANTHER" id="PTHR10869">
    <property type="entry name" value="PROLYL 4-HYDROXYLASE ALPHA SUBUNIT"/>
    <property type="match status" value="1"/>
</dbReference>
<dbReference type="PANTHER" id="PTHR10869:SF101">
    <property type="entry name" value="PROLYL 4-HYDROXYLASE SUBUNIT ALPHA-1"/>
    <property type="match status" value="1"/>
</dbReference>
<dbReference type="Pfam" id="PF13640">
    <property type="entry name" value="2OG-FeII_Oxy_3"/>
    <property type="match status" value="1"/>
</dbReference>
<dbReference type="Pfam" id="PF08336">
    <property type="entry name" value="P4Ha_N"/>
    <property type="match status" value="1"/>
</dbReference>
<dbReference type="Pfam" id="PF23558">
    <property type="entry name" value="TPR_P4H"/>
    <property type="match status" value="1"/>
</dbReference>
<dbReference type="SMART" id="SM00702">
    <property type="entry name" value="P4Hc"/>
    <property type="match status" value="1"/>
</dbReference>
<dbReference type="SUPFAM" id="SSF48452">
    <property type="entry name" value="TPR-like"/>
    <property type="match status" value="1"/>
</dbReference>
<dbReference type="PROSITE" id="PS51471">
    <property type="entry name" value="FE2OG_OXY"/>
    <property type="match status" value="1"/>
</dbReference>
<dbReference type="PROSITE" id="PS50005">
    <property type="entry name" value="TPR"/>
    <property type="match status" value="1"/>
</dbReference>
<dbReference type="PROSITE" id="PS50293">
    <property type="entry name" value="TPR_REGION"/>
    <property type="match status" value="1"/>
</dbReference>
<accession>Q1RMU3</accession>
<gene>
    <name type="primary">P4HA1</name>
</gene>
<feature type="signal peptide" evidence="1">
    <location>
        <begin position="1"/>
        <end position="17"/>
    </location>
</feature>
<feature type="chain" id="PRO_0000288111" description="Prolyl 4-hydroxylase subunit alpha-1">
    <location>
        <begin position="18"/>
        <end position="534"/>
    </location>
</feature>
<feature type="repeat" description="TPR">
    <location>
        <begin position="205"/>
        <end position="238"/>
    </location>
</feature>
<feature type="domain" description="Fe2OG dioxygenase" evidence="3">
    <location>
        <begin position="411"/>
        <end position="519"/>
    </location>
</feature>
<feature type="region of interest" description="Disordered" evidence="4">
    <location>
        <begin position="258"/>
        <end position="277"/>
    </location>
</feature>
<feature type="binding site" evidence="3">
    <location>
        <position position="429"/>
    </location>
    <ligand>
        <name>Fe cation</name>
        <dbReference type="ChEBI" id="CHEBI:24875"/>
    </ligand>
</feature>
<feature type="binding site" evidence="3">
    <location>
        <position position="431"/>
    </location>
    <ligand>
        <name>Fe cation</name>
        <dbReference type="ChEBI" id="CHEBI:24875"/>
    </ligand>
</feature>
<feature type="binding site" evidence="3">
    <location>
        <position position="500"/>
    </location>
    <ligand>
        <name>Fe cation</name>
        <dbReference type="ChEBI" id="CHEBI:24875"/>
    </ligand>
</feature>
<feature type="binding site" evidence="3">
    <location>
        <position position="510"/>
    </location>
    <ligand>
        <name>2-oxoglutarate</name>
        <dbReference type="ChEBI" id="CHEBI:16810"/>
    </ligand>
</feature>
<feature type="glycosylation site" description="N-linked (GlcNAc...) asparagine">
    <location>
        <position position="113"/>
    </location>
</feature>
<feature type="glycosylation site" description="N-linked (GlcNAc...) asparagine">
    <location>
        <position position="259"/>
    </location>
</feature>
<organism>
    <name type="scientific">Bos taurus</name>
    <name type="common">Bovine</name>
    <dbReference type="NCBI Taxonomy" id="9913"/>
    <lineage>
        <taxon>Eukaryota</taxon>
        <taxon>Metazoa</taxon>
        <taxon>Chordata</taxon>
        <taxon>Craniata</taxon>
        <taxon>Vertebrata</taxon>
        <taxon>Euteleostomi</taxon>
        <taxon>Mammalia</taxon>
        <taxon>Eutheria</taxon>
        <taxon>Laurasiatheria</taxon>
        <taxon>Artiodactyla</taxon>
        <taxon>Ruminantia</taxon>
        <taxon>Pecora</taxon>
        <taxon>Bovidae</taxon>
        <taxon>Bovinae</taxon>
        <taxon>Bos</taxon>
    </lineage>
</organism>
<protein>
    <recommendedName>
        <fullName>Prolyl 4-hydroxylase subunit alpha-1</fullName>
        <shortName>4-PH alpha-1</shortName>
        <ecNumber evidence="2">1.14.11.2</ecNumber>
    </recommendedName>
    <alternativeName>
        <fullName>Procollagen-proline,2-oxoglutarate-4-dioxygenase subunit alpha-1</fullName>
    </alternativeName>
</protein>
<comment type="function">
    <text evidence="2">Catalyzes the post-translational formation of 4-hydroxyproline in -Xaa-Pro-Gly- sequences in collagens and other proteins.</text>
</comment>
<comment type="catalytic activity">
    <reaction evidence="2">
        <text>L-prolyl-[collagen] + 2-oxoglutarate + O2 = trans-4-hydroxy-L-prolyl-[collagen] + succinate + CO2</text>
        <dbReference type="Rhea" id="RHEA:18945"/>
        <dbReference type="Rhea" id="RHEA-COMP:11676"/>
        <dbReference type="Rhea" id="RHEA-COMP:11680"/>
        <dbReference type="ChEBI" id="CHEBI:15379"/>
        <dbReference type="ChEBI" id="CHEBI:16526"/>
        <dbReference type="ChEBI" id="CHEBI:16810"/>
        <dbReference type="ChEBI" id="CHEBI:30031"/>
        <dbReference type="ChEBI" id="CHEBI:50342"/>
        <dbReference type="ChEBI" id="CHEBI:61965"/>
        <dbReference type="EC" id="1.14.11.2"/>
    </reaction>
</comment>
<comment type="cofactor">
    <cofactor evidence="3">
        <name>Fe(2+)</name>
        <dbReference type="ChEBI" id="CHEBI:29033"/>
    </cofactor>
    <text evidence="3">Binds 1 Fe(2+) ion per subunit.</text>
</comment>
<comment type="cofactor">
    <cofactor evidence="2">
        <name>L-ascorbate</name>
        <dbReference type="ChEBI" id="CHEBI:38290"/>
    </cofactor>
</comment>
<comment type="subunit">
    <text evidence="2">Heterotetramer of two alpha-1 chains and two beta chains (P4HB)(the beta chain is the multi-functional PDI), where P4HB plays the role of a structural subunit; this tetramer catalyzes the formation of 4-hydroxyproline in collagen.</text>
</comment>
<comment type="subcellular location">
    <subcellularLocation>
        <location evidence="1">Endoplasmic reticulum lumen</location>
    </subcellularLocation>
</comment>
<comment type="similarity">
    <text evidence="5">Belongs to the P4HA family.</text>
</comment>
<reference key="1">
    <citation type="submission" date="2006-04" db="EMBL/GenBank/DDBJ databases">
        <authorList>
            <consortium name="NIH - Mammalian Gene Collection (MGC) project"/>
        </authorList>
    </citation>
    <scope>NUCLEOTIDE SEQUENCE [LARGE SCALE MRNA]</scope>
    <source>
        <strain>Hereford</strain>
        <tissue>Uterus</tissue>
    </source>
</reference>
<name>P4HA1_BOVIN</name>
<keyword id="KW-0223">Dioxygenase</keyword>
<keyword id="KW-0256">Endoplasmic reticulum</keyword>
<keyword id="KW-0325">Glycoprotein</keyword>
<keyword id="KW-0408">Iron</keyword>
<keyword id="KW-0479">Metal-binding</keyword>
<keyword id="KW-0560">Oxidoreductase</keyword>
<keyword id="KW-1185">Reference proteome</keyword>
<keyword id="KW-0732">Signal</keyword>
<keyword id="KW-0802">TPR repeat</keyword>
<keyword id="KW-0847">Vitamin C</keyword>
<proteinExistence type="evidence at protein level"/>